<accession>B7UNG5</accession>
<proteinExistence type="inferred from homology"/>
<dbReference type="EC" id="2.7.-.-" evidence="1"/>
<dbReference type="EMBL" id="FM180568">
    <property type="protein sequence ID" value="CAS11697.1"/>
    <property type="molecule type" value="Genomic_DNA"/>
</dbReference>
<dbReference type="RefSeq" id="WP_000187543.1">
    <property type="nucleotide sequence ID" value="NC_011601.1"/>
</dbReference>
<dbReference type="SMR" id="B7UNG5"/>
<dbReference type="GeneID" id="75174071"/>
<dbReference type="KEGG" id="ecg:E2348C_4149"/>
<dbReference type="HOGENOM" id="CLU_006533_0_0_6"/>
<dbReference type="UniPathway" id="UPA00232"/>
<dbReference type="Proteomes" id="UP000008205">
    <property type="component" value="Chromosome"/>
</dbReference>
<dbReference type="GO" id="GO:0005886">
    <property type="term" value="C:plasma membrane"/>
    <property type="evidence" value="ECO:0007669"/>
    <property type="project" value="UniProtKB-SubCell"/>
</dbReference>
<dbReference type="GO" id="GO:0005524">
    <property type="term" value="F:ATP binding"/>
    <property type="evidence" value="ECO:0007669"/>
    <property type="project" value="UniProtKB-KW"/>
</dbReference>
<dbReference type="GO" id="GO:0004672">
    <property type="term" value="F:protein kinase activity"/>
    <property type="evidence" value="ECO:0007669"/>
    <property type="project" value="UniProtKB-UniRule"/>
</dbReference>
<dbReference type="GO" id="GO:0010795">
    <property type="term" value="P:regulation of ubiquinone biosynthetic process"/>
    <property type="evidence" value="ECO:0007669"/>
    <property type="project" value="UniProtKB-UniRule"/>
</dbReference>
<dbReference type="GO" id="GO:0006744">
    <property type="term" value="P:ubiquinone biosynthetic process"/>
    <property type="evidence" value="ECO:0007669"/>
    <property type="project" value="UniProtKB-UniPathway"/>
</dbReference>
<dbReference type="CDD" id="cd13972">
    <property type="entry name" value="UbiB"/>
    <property type="match status" value="1"/>
</dbReference>
<dbReference type="HAMAP" id="MF_00414">
    <property type="entry name" value="UbiB"/>
    <property type="match status" value="1"/>
</dbReference>
<dbReference type="InterPro" id="IPR004147">
    <property type="entry name" value="ABC1_dom"/>
</dbReference>
<dbReference type="InterPro" id="IPR011009">
    <property type="entry name" value="Kinase-like_dom_sf"/>
</dbReference>
<dbReference type="InterPro" id="IPR010232">
    <property type="entry name" value="UbiB"/>
</dbReference>
<dbReference type="InterPro" id="IPR045308">
    <property type="entry name" value="UbiB_bact"/>
</dbReference>
<dbReference type="InterPro" id="IPR050154">
    <property type="entry name" value="UbiB_kinase"/>
</dbReference>
<dbReference type="NCBIfam" id="NF003404">
    <property type="entry name" value="PRK04750.1"/>
    <property type="match status" value="1"/>
</dbReference>
<dbReference type="NCBIfam" id="TIGR01982">
    <property type="entry name" value="UbiB"/>
    <property type="match status" value="1"/>
</dbReference>
<dbReference type="PANTHER" id="PTHR10566">
    <property type="entry name" value="CHAPERONE-ACTIVITY OF BC1 COMPLEX CABC1 -RELATED"/>
    <property type="match status" value="1"/>
</dbReference>
<dbReference type="PANTHER" id="PTHR10566:SF113">
    <property type="entry name" value="PROTEIN ACTIVITY OF BC1 COMPLEX KINASE 7, CHLOROPLASTIC"/>
    <property type="match status" value="1"/>
</dbReference>
<dbReference type="Pfam" id="PF03109">
    <property type="entry name" value="ABC1"/>
    <property type="match status" value="1"/>
</dbReference>
<dbReference type="SUPFAM" id="SSF56112">
    <property type="entry name" value="Protein kinase-like (PK-like)"/>
    <property type="match status" value="1"/>
</dbReference>
<organism>
    <name type="scientific">Escherichia coli O127:H6 (strain E2348/69 / EPEC)</name>
    <dbReference type="NCBI Taxonomy" id="574521"/>
    <lineage>
        <taxon>Bacteria</taxon>
        <taxon>Pseudomonadati</taxon>
        <taxon>Pseudomonadota</taxon>
        <taxon>Gammaproteobacteria</taxon>
        <taxon>Enterobacterales</taxon>
        <taxon>Enterobacteriaceae</taxon>
        <taxon>Escherichia</taxon>
    </lineage>
</organism>
<protein>
    <recommendedName>
        <fullName evidence="1">Probable protein kinase UbiB</fullName>
        <ecNumber evidence="1">2.7.-.-</ecNumber>
    </recommendedName>
    <alternativeName>
        <fullName evidence="1">Ubiquinone biosynthesis protein UbiB</fullName>
    </alternativeName>
</protein>
<comment type="function">
    <text evidence="1">Is probably a protein kinase regulator of UbiI activity which is involved in aerobic coenzyme Q (ubiquinone) biosynthesis.</text>
</comment>
<comment type="pathway">
    <text>Cofactor biosynthesis; ubiquinone biosynthesis [regulation].</text>
</comment>
<comment type="subcellular location">
    <subcellularLocation>
        <location evidence="1">Cell inner membrane</location>
        <topology evidence="1">Multi-pass membrane protein</topology>
    </subcellularLocation>
</comment>
<comment type="similarity">
    <text evidence="1">Belongs to the ABC1 family. UbiB subfamily.</text>
</comment>
<keyword id="KW-0067">ATP-binding</keyword>
<keyword id="KW-0997">Cell inner membrane</keyword>
<keyword id="KW-1003">Cell membrane</keyword>
<keyword id="KW-0418">Kinase</keyword>
<keyword id="KW-0472">Membrane</keyword>
<keyword id="KW-0547">Nucleotide-binding</keyword>
<keyword id="KW-1185">Reference proteome</keyword>
<keyword id="KW-0808">Transferase</keyword>
<keyword id="KW-0812">Transmembrane</keyword>
<keyword id="KW-1133">Transmembrane helix</keyword>
<keyword id="KW-0831">Ubiquinone biosynthesis</keyword>
<gene>
    <name evidence="1" type="primary">ubiB</name>
    <name type="ordered locus">E2348C_4149</name>
</gene>
<feature type="chain" id="PRO_1000134815" description="Probable protein kinase UbiB">
    <location>
        <begin position="1"/>
        <end position="546"/>
    </location>
</feature>
<feature type="transmembrane region" description="Helical" evidence="1">
    <location>
        <begin position="501"/>
        <end position="521"/>
    </location>
</feature>
<feature type="transmembrane region" description="Helical" evidence="1">
    <location>
        <begin position="522"/>
        <end position="542"/>
    </location>
</feature>
<feature type="domain" description="Protein kinase" evidence="1">
    <location>
        <begin position="124"/>
        <end position="502"/>
    </location>
</feature>
<feature type="active site" description="Proton acceptor" evidence="1">
    <location>
        <position position="288"/>
    </location>
</feature>
<feature type="binding site" evidence="1">
    <location>
        <begin position="130"/>
        <end position="138"/>
    </location>
    <ligand>
        <name>ATP</name>
        <dbReference type="ChEBI" id="CHEBI:30616"/>
    </ligand>
</feature>
<feature type="binding site" evidence="1">
    <location>
        <position position="153"/>
    </location>
    <ligand>
        <name>ATP</name>
        <dbReference type="ChEBI" id="CHEBI:30616"/>
    </ligand>
</feature>
<sequence>MTPGEVRRLYFIIRTFLSYGLDELIPKMRITLPLRLWRYSLFWMPNRHKDKPLGERLRLALQELGPVWIKFGQMLSTRRDLFPPHIADQLALLQDKVAPFDGKLAKQQIEAAMGGLPVEAWFDDFEIKPLASASIAQVHTARLKSNGKEVVIKVIRPDILPVIKADLKLIYRLARWVPRLLPDGRRLRPTEVVREYEKTLIDELNLLRESANAIQLRRNFEDSPMLYIPEVYPDYCSEGMMVMERIYGIPVSDVAALEKNGTNMKLLAERGVQVFFTQVFRDSFFHADMHPGNIFVSYEHPENPKYIGIDCGIVGSLNKEDKRYLAENFIAFFNRDYRKVAELHVDSGWVPPDTNVEEFEFAIRTVCEPIFEKPLAEISFGHVLLNLFNTARRFNMEVQPQLVLLQKTLLYVEGVGRQLYPQLDLWKTAKPFLESWIKDQVGIPALVRAFKEKAPFWVEKMPELPELVYDSLRQGKYLQHSVDKIARELQSNHVRQGQSRYFLGIGATLVLSGTFLLVSRPEWGLMPGWLMAGGLIAWFVGWRKTR</sequence>
<name>UBIB_ECO27</name>
<reference key="1">
    <citation type="journal article" date="2009" name="J. Bacteriol.">
        <title>Complete genome sequence and comparative genome analysis of enteropathogenic Escherichia coli O127:H6 strain E2348/69.</title>
        <authorList>
            <person name="Iguchi A."/>
            <person name="Thomson N.R."/>
            <person name="Ogura Y."/>
            <person name="Saunders D."/>
            <person name="Ooka T."/>
            <person name="Henderson I.R."/>
            <person name="Harris D."/>
            <person name="Asadulghani M."/>
            <person name="Kurokawa K."/>
            <person name="Dean P."/>
            <person name="Kenny B."/>
            <person name="Quail M.A."/>
            <person name="Thurston S."/>
            <person name="Dougan G."/>
            <person name="Hayashi T."/>
            <person name="Parkhill J."/>
            <person name="Frankel G."/>
        </authorList>
    </citation>
    <scope>NUCLEOTIDE SEQUENCE [LARGE SCALE GENOMIC DNA]</scope>
    <source>
        <strain>E2348/69 / EPEC</strain>
    </source>
</reference>
<evidence type="ECO:0000255" key="1">
    <source>
        <dbReference type="HAMAP-Rule" id="MF_00414"/>
    </source>
</evidence>